<proteinExistence type="evidence at protein level"/>
<gene>
    <name type="primary">EPHX1</name>
</gene>
<accession>P04068</accession>
<reference key="1">
    <citation type="journal article" date="1989" name="Arch. Biochem. Biophys.">
        <title>Rabbit microsomal epoxide hydrolase: isolation and characterization of the xenobiotic metabolizing enzyme cDNA.</title>
        <authorList>
            <person name="Hassett C."/>
            <person name="Turnblom S.M."/>
            <person name="Deangeles A."/>
            <person name="Omiecinski C.J."/>
        </authorList>
    </citation>
    <scope>NUCLEOTIDE SEQUENCE [MRNA]</scope>
</reference>
<reference key="2">
    <citation type="journal article" date="1984" name="J. Biol. Chem.">
        <title>The covalent structure of hepatic microsomal epoxide hydrolase. II. The complete amino acid sequence.</title>
        <authorList>
            <person name="Heinemann F.S."/>
            <person name="Ozols J."/>
        </authorList>
    </citation>
    <scope>PROTEIN SEQUENCE</scope>
    <source>
        <strain>New Zealand white</strain>
        <tissue>Liver</tissue>
    </source>
</reference>
<feature type="chain" id="PRO_0000080858" description="Epoxide hydrolase 1">
    <location>
        <begin position="1"/>
        <end position="455"/>
    </location>
</feature>
<feature type="transmembrane region" description="Helical; Signal-anchor for type III membrane protein" evidence="5">
    <location>
        <begin position="1"/>
        <end position="21"/>
    </location>
</feature>
<feature type="topological domain" description="Cytoplasmic" evidence="2">
    <location>
        <begin position="22"/>
        <end position="455"/>
    </location>
</feature>
<feature type="active site" description="Nucleophile" evidence="2">
    <location>
        <position position="226"/>
    </location>
</feature>
<feature type="active site" description="Proton donor" evidence="3">
    <location>
        <position position="374"/>
    </location>
</feature>
<feature type="active site" description="Proton acceptor" evidence="2">
    <location>
        <position position="431"/>
    </location>
</feature>
<feature type="modified residue" description="Dimethylated arginine" evidence="2">
    <location>
        <position position="295"/>
    </location>
</feature>
<feature type="sequence conflict" description="In Ref. 2; AA sequence." evidence="6" ref="2">
    <location>
        <begin position="68"/>
        <end position="70"/>
    </location>
</feature>
<feature type="sequence conflict" description="In Ref. 2; AA sequence." evidence="6" ref="2">
    <original>Y</original>
    <variation>L</variation>
    <location>
        <position position="113"/>
    </location>
</feature>
<feature type="sequence conflict" description="In Ref. 2; AA sequence." evidence="6" ref="2">
    <original>SVS</original>
    <variation>NVV</variation>
    <location>
        <begin position="201"/>
        <end position="203"/>
    </location>
</feature>
<feature type="sequence conflict" description="In Ref. 2; AA sequence." evidence="6" ref="2">
    <original>M</original>
    <variation>RISSY</variation>
    <location>
        <position position="212"/>
    </location>
</feature>
<feature type="sequence conflict" description="In Ref. 2; AA sequence." evidence="6" ref="2">
    <original>LN</original>
    <variation>DL</variation>
    <location>
        <begin position="248"/>
        <end position="249"/>
    </location>
</feature>
<feature type="sequence conflict" description="In Ref. 2; AA sequence." evidence="6" ref="2">
    <original>R</original>
    <variation>Q</variation>
    <location>
        <position position="303"/>
    </location>
</feature>
<feature type="sequence conflict" description="In Ref. 2; AA sequence." evidence="6" ref="2">
    <original>SIVSSQ</original>
    <variation>WIRTHY</variation>
    <location>
        <begin position="366"/>
        <end position="371"/>
    </location>
</feature>
<feature type="sequence conflict" description="In Ref. 2; AA sequence." evidence="6" ref="2">
    <location>
        <position position="455"/>
    </location>
</feature>
<protein>
    <recommendedName>
        <fullName>Epoxide hydrolase 1</fullName>
        <ecNumber evidence="2">3.3.2.9</ecNumber>
    </recommendedName>
    <alternativeName>
        <fullName>Epoxide hydratase</fullName>
    </alternativeName>
    <alternativeName>
        <fullName>Microsomal epoxide hydrolase</fullName>
        <shortName evidence="6">mEH</shortName>
    </alternativeName>
</protein>
<comment type="function">
    <text evidence="1 2 4">Biotransformation enzyme that catalyzes the hydrolysis of arene and aliphatic epoxides to less reactive and more water soluble dihydrodiols by the trans addition of water. May play a role in the metabolism of endogenous lipids such as epoxide-containing fatty acids. Metabolizes the abundant endocannabinoid 2-arachidonoylglycerol (2-AG) to free arachidonic acid (AA) and glycerol (By similarity). Binds 20(S)-hydroxycholesterol (20(S)-OHC) (By similarity).</text>
</comment>
<comment type="catalytic activity">
    <reaction evidence="1 2">
        <text>cis-stilbene oxide + H2O = (1R,2R)-hydrobenzoin</text>
        <dbReference type="Rhea" id="RHEA:23900"/>
        <dbReference type="ChEBI" id="CHEBI:15377"/>
        <dbReference type="ChEBI" id="CHEBI:50004"/>
        <dbReference type="ChEBI" id="CHEBI:50014"/>
        <dbReference type="EC" id="3.3.2.9"/>
    </reaction>
    <physiologicalReaction direction="left-to-right" evidence="1">
        <dbReference type="Rhea" id="RHEA:23901"/>
    </physiologicalReaction>
</comment>
<comment type="catalytic activity">
    <reaction evidence="2">
        <text>1-(4-methoxyphenyl)-N-methyl-N-[(3-methyloxetan-3-yl)methyl]methanamine + H2O = 2-{[(4-methoxybenzyl)(methyl)amino]methyl}-2-methylpropane-1,3-diol</text>
        <dbReference type="Rhea" id="RHEA:55764"/>
        <dbReference type="ChEBI" id="CHEBI:15377"/>
        <dbReference type="ChEBI" id="CHEBI:139161"/>
        <dbReference type="ChEBI" id="CHEBI:139164"/>
        <dbReference type="EC" id="3.3.2.9"/>
    </reaction>
</comment>
<comment type="catalytic activity">
    <reaction evidence="1">
        <text>8,9-epoxy-(5Z,11Z,14Z)-eicosatrienoate + H2O = 8,9-dihydroxy-(5Z,11Z,14Z)-eicosatrienoate</text>
        <dbReference type="Rhea" id="RHEA:44048"/>
        <dbReference type="ChEBI" id="CHEBI:15377"/>
        <dbReference type="ChEBI" id="CHEBI:84025"/>
        <dbReference type="ChEBI" id="CHEBI:84032"/>
    </reaction>
    <physiologicalReaction direction="left-to-right" evidence="1">
        <dbReference type="Rhea" id="RHEA:44049"/>
    </physiologicalReaction>
</comment>
<comment type="catalytic activity">
    <reaction evidence="1">
        <text>11,12-epoxy-(5Z,8Z,14Z)-eicosatrienoate + H2O = 11,12-dihydroxy-(5Z,8Z,14Z)-eicosatrienoate</text>
        <dbReference type="Rhea" id="RHEA:44044"/>
        <dbReference type="ChEBI" id="CHEBI:15377"/>
        <dbReference type="ChEBI" id="CHEBI:76625"/>
        <dbReference type="ChEBI" id="CHEBI:84031"/>
    </reaction>
    <physiologicalReaction direction="left-to-right" evidence="1">
        <dbReference type="Rhea" id="RHEA:44045"/>
    </physiologicalReaction>
</comment>
<comment type="catalytic activity">
    <reaction evidence="1">
        <text>2-(5Z,8Z,11Z,14Z-eicosatetraenoyl)-glycerol + H2O = glycerol + (5Z,8Z,11Z,14Z)-eicosatetraenoate + H(+)</text>
        <dbReference type="Rhea" id="RHEA:26132"/>
        <dbReference type="ChEBI" id="CHEBI:15377"/>
        <dbReference type="ChEBI" id="CHEBI:15378"/>
        <dbReference type="ChEBI" id="CHEBI:17754"/>
        <dbReference type="ChEBI" id="CHEBI:32395"/>
        <dbReference type="ChEBI" id="CHEBI:52392"/>
    </reaction>
    <physiologicalReaction direction="left-to-right" evidence="1">
        <dbReference type="Rhea" id="RHEA:26133"/>
    </physiologicalReaction>
</comment>
<comment type="activity regulation">
    <text evidence="1">Inhibited by 10-hydroxystearamide and methoxy-arachidonyl fluorophosphate.</text>
</comment>
<comment type="subcellular location">
    <subcellularLocation>
        <location evidence="2">Microsome membrane</location>
        <topology evidence="2">Single-pass type III membrane protein</topology>
    </subcellularLocation>
    <subcellularLocation>
        <location evidence="2">Endoplasmic reticulum membrane</location>
        <topology evidence="2">Single-pass type III membrane protein</topology>
    </subcellularLocation>
</comment>
<comment type="similarity">
    <text evidence="6">Belongs to the peptidase S33 family.</text>
</comment>
<sequence>MLLELLLASVLGFVIYWFVSGDKEESLPLEDGWWGPGSRPVGLEDESIRPFKVETSDEEINDLHQRIDRIRLTPPLENSRFHYGFNSNYLKKILSYWRHEFDWKKQVEILNSYPHFKTKIEGLDIHFIHVKPPQVPPGRTPKPLLMVHGWPGSFFEFYKIIPLLTDPKSHGLSDEHIFEVICPSIPGYGFSQASSKKGFNSVSTARIFYKLMLRLGFQEFYIQGGDWGALVCTNMAQLVPSHVKGLHLNMALILRNHYTLTLLLGRRIGGLLGYTERDMELLYPFKEKVFYSLMRESGYMHIRATKPDTVGCALNDSPVGLAAYILEKFSTWTNSEFRDLEDGGLERKFSLQDLLTNIMIYWTTGSIVSSQRYYKENLGQGFMAHKHERLKVHVPTGFAAFPCEIMHVPEKWVRTKYPQLISYSYMPRGGHFAAFEEPELLARDICKFVGLVERQ</sequence>
<name>HYEP_RABIT</name>
<dbReference type="EC" id="3.3.2.9" evidence="2"/>
<dbReference type="EMBL" id="M21496">
    <property type="protein sequence ID" value="AAA31392.1"/>
    <property type="molecule type" value="mRNA"/>
</dbReference>
<dbReference type="PIR" id="S04342">
    <property type="entry name" value="YXRBH"/>
</dbReference>
<dbReference type="RefSeq" id="NP_001075744.1">
    <property type="nucleotide sequence ID" value="NM_001082275.1"/>
</dbReference>
<dbReference type="SMR" id="P04068"/>
<dbReference type="FunCoup" id="P04068">
    <property type="interactions" value="232"/>
</dbReference>
<dbReference type="STRING" id="9986.ENSOCUP00000037403"/>
<dbReference type="ESTHER" id="rabit-hyep">
    <property type="family name" value="Epoxide_hydrolase"/>
</dbReference>
<dbReference type="MEROPS" id="S33.971"/>
<dbReference type="PaxDb" id="9986-ENSOCUP00000010259"/>
<dbReference type="GeneID" id="100009104"/>
<dbReference type="KEGG" id="ocu:100009104"/>
<dbReference type="CTD" id="2052"/>
<dbReference type="eggNOG" id="KOG2565">
    <property type="taxonomic scope" value="Eukaryota"/>
</dbReference>
<dbReference type="InParanoid" id="P04068"/>
<dbReference type="OrthoDB" id="7130006at2759"/>
<dbReference type="BRENDA" id="3.3.2.9">
    <property type="organism ID" value="1749"/>
</dbReference>
<dbReference type="Proteomes" id="UP000001811">
    <property type="component" value="Unplaced"/>
</dbReference>
<dbReference type="GO" id="GO:0005789">
    <property type="term" value="C:endoplasmic reticulum membrane"/>
    <property type="evidence" value="ECO:0007669"/>
    <property type="project" value="UniProtKB-SubCell"/>
</dbReference>
<dbReference type="GO" id="GO:0033961">
    <property type="term" value="F:cis-stilbene-oxide hydrolase activity"/>
    <property type="evidence" value="ECO:0000250"/>
    <property type="project" value="UniProtKB"/>
</dbReference>
<dbReference type="GO" id="GO:0004301">
    <property type="term" value="F:epoxide hydrolase activity"/>
    <property type="evidence" value="ECO:0000250"/>
    <property type="project" value="UniProtKB"/>
</dbReference>
<dbReference type="GO" id="GO:0008142">
    <property type="term" value="F:oxysterol binding"/>
    <property type="evidence" value="ECO:0000250"/>
    <property type="project" value="UniProtKB"/>
</dbReference>
<dbReference type="GO" id="GO:0019369">
    <property type="term" value="P:arachidonate metabolic process"/>
    <property type="evidence" value="ECO:0000250"/>
    <property type="project" value="UniProtKB"/>
</dbReference>
<dbReference type="GO" id="GO:0009056">
    <property type="term" value="P:catabolic process"/>
    <property type="evidence" value="ECO:0007669"/>
    <property type="project" value="UniProtKB-KW"/>
</dbReference>
<dbReference type="GO" id="GO:0097176">
    <property type="term" value="P:epoxide metabolic process"/>
    <property type="evidence" value="ECO:0007669"/>
    <property type="project" value="TreeGrafter"/>
</dbReference>
<dbReference type="GO" id="GO:0009636">
    <property type="term" value="P:response to toxic substance"/>
    <property type="evidence" value="ECO:0007669"/>
    <property type="project" value="UniProtKB-KW"/>
</dbReference>
<dbReference type="FunFam" id="3.40.50.1820:FF:000172">
    <property type="entry name" value="Epoxide hydrolase"/>
    <property type="match status" value="1"/>
</dbReference>
<dbReference type="Gene3D" id="3.40.50.1820">
    <property type="entry name" value="alpha/beta hydrolase"/>
    <property type="match status" value="1"/>
</dbReference>
<dbReference type="InterPro" id="IPR029058">
    <property type="entry name" value="AB_hydrolase_fold"/>
</dbReference>
<dbReference type="InterPro" id="IPR000639">
    <property type="entry name" value="Epox_hydrolase-like"/>
</dbReference>
<dbReference type="InterPro" id="IPR010497">
    <property type="entry name" value="Epoxide_hydro_N"/>
</dbReference>
<dbReference type="InterPro" id="IPR016292">
    <property type="entry name" value="Epoxide_hydrolase"/>
</dbReference>
<dbReference type="PANTHER" id="PTHR21661:SF78">
    <property type="entry name" value="EPOXIDE HYDROLASE 1"/>
    <property type="match status" value="1"/>
</dbReference>
<dbReference type="PANTHER" id="PTHR21661">
    <property type="entry name" value="EPOXIDE HYDROLASE 1-RELATED"/>
    <property type="match status" value="1"/>
</dbReference>
<dbReference type="Pfam" id="PF06441">
    <property type="entry name" value="EHN"/>
    <property type="match status" value="1"/>
</dbReference>
<dbReference type="PIRSF" id="PIRSF001112">
    <property type="entry name" value="Epoxide_hydrolase"/>
    <property type="match status" value="1"/>
</dbReference>
<dbReference type="PRINTS" id="PR00412">
    <property type="entry name" value="EPOXHYDRLASE"/>
</dbReference>
<dbReference type="SUPFAM" id="SSF53474">
    <property type="entry name" value="alpha/beta-Hydrolases"/>
    <property type="match status" value="1"/>
</dbReference>
<organism>
    <name type="scientific">Oryctolagus cuniculus</name>
    <name type="common">Rabbit</name>
    <dbReference type="NCBI Taxonomy" id="9986"/>
    <lineage>
        <taxon>Eukaryota</taxon>
        <taxon>Metazoa</taxon>
        <taxon>Chordata</taxon>
        <taxon>Craniata</taxon>
        <taxon>Vertebrata</taxon>
        <taxon>Euteleostomi</taxon>
        <taxon>Mammalia</taxon>
        <taxon>Eutheria</taxon>
        <taxon>Euarchontoglires</taxon>
        <taxon>Glires</taxon>
        <taxon>Lagomorpha</taxon>
        <taxon>Leporidae</taxon>
        <taxon>Oryctolagus</taxon>
    </lineage>
</organism>
<evidence type="ECO:0000250" key="1">
    <source>
        <dbReference type="UniProtKB" id="P07099"/>
    </source>
</evidence>
<evidence type="ECO:0000250" key="2">
    <source>
        <dbReference type="UniProtKB" id="P07687"/>
    </source>
</evidence>
<evidence type="ECO:0000250" key="3">
    <source>
        <dbReference type="UniProtKB" id="P34913"/>
    </source>
</evidence>
<evidence type="ECO:0000250" key="4">
    <source>
        <dbReference type="UniProtKB" id="Q9D379"/>
    </source>
</evidence>
<evidence type="ECO:0000255" key="5"/>
<evidence type="ECO:0000305" key="6"/>
<keyword id="KW-0058">Aromatic hydrocarbons catabolism</keyword>
<keyword id="KW-0216">Detoxification</keyword>
<keyword id="KW-0903">Direct protein sequencing</keyword>
<keyword id="KW-0256">Endoplasmic reticulum</keyword>
<keyword id="KW-0378">Hydrolase</keyword>
<keyword id="KW-0443">Lipid metabolism</keyword>
<keyword id="KW-0472">Membrane</keyword>
<keyword id="KW-0488">Methylation</keyword>
<keyword id="KW-0492">Microsome</keyword>
<keyword id="KW-1185">Reference proteome</keyword>
<keyword id="KW-0812">Transmembrane</keyword>
<keyword id="KW-1133">Transmembrane helix</keyword>